<comment type="similarity">
    <text evidence="1">Belongs to the peptidase M20 family.</text>
</comment>
<dbReference type="EC" id="3.-.-.-"/>
<dbReference type="EMBL" id="L42023">
    <property type="protein sequence ID" value="AAC22245.1"/>
    <property type="molecule type" value="Genomic_DNA"/>
</dbReference>
<dbReference type="PIR" id="D64079">
    <property type="entry name" value="D64079"/>
</dbReference>
<dbReference type="RefSeq" id="NP_438746.1">
    <property type="nucleotide sequence ID" value="NC_000907.1"/>
</dbReference>
<dbReference type="SMR" id="Q57051"/>
<dbReference type="STRING" id="71421.HI_0588"/>
<dbReference type="EnsemblBacteria" id="AAC22245">
    <property type="protein sequence ID" value="AAC22245"/>
    <property type="gene ID" value="HI_0588"/>
</dbReference>
<dbReference type="KEGG" id="hin:HI_0588"/>
<dbReference type="PATRIC" id="fig|71421.8.peg.609"/>
<dbReference type="eggNOG" id="COG0624">
    <property type="taxonomic scope" value="Bacteria"/>
</dbReference>
<dbReference type="HOGENOM" id="CLU_024588_6_0_6"/>
<dbReference type="OrthoDB" id="9808195at2"/>
<dbReference type="PhylomeDB" id="Q57051"/>
<dbReference type="BioCyc" id="HINF71421:G1GJ1-600-MONOMER"/>
<dbReference type="Proteomes" id="UP000000579">
    <property type="component" value="Chromosome"/>
</dbReference>
<dbReference type="GO" id="GO:0016813">
    <property type="term" value="F:hydrolase activity, acting on carbon-nitrogen (but not peptide) bonds, in linear amidines"/>
    <property type="evidence" value="ECO:0007669"/>
    <property type="project" value="InterPro"/>
</dbReference>
<dbReference type="CDD" id="cd03884">
    <property type="entry name" value="M20_bAS"/>
    <property type="match status" value="1"/>
</dbReference>
<dbReference type="Gene3D" id="3.30.70.360">
    <property type="match status" value="1"/>
</dbReference>
<dbReference type="Gene3D" id="3.40.630.10">
    <property type="entry name" value="Zn peptidases"/>
    <property type="match status" value="1"/>
</dbReference>
<dbReference type="InterPro" id="IPR010158">
    <property type="entry name" value="Amidase_Cbmase"/>
</dbReference>
<dbReference type="InterPro" id="IPR001261">
    <property type="entry name" value="ArgE/DapE_CS"/>
</dbReference>
<dbReference type="InterPro" id="IPR036264">
    <property type="entry name" value="Bact_exopeptidase_dim_dom"/>
</dbReference>
<dbReference type="InterPro" id="IPR002933">
    <property type="entry name" value="Peptidase_M20"/>
</dbReference>
<dbReference type="InterPro" id="IPR011650">
    <property type="entry name" value="Peptidase_M20_dimer"/>
</dbReference>
<dbReference type="NCBIfam" id="TIGR01879">
    <property type="entry name" value="hydantase"/>
    <property type="match status" value="1"/>
</dbReference>
<dbReference type="NCBIfam" id="NF006771">
    <property type="entry name" value="PRK09290.1-5"/>
    <property type="match status" value="1"/>
</dbReference>
<dbReference type="PANTHER" id="PTHR32494:SF5">
    <property type="entry name" value="ALLANTOATE AMIDOHYDROLASE"/>
    <property type="match status" value="1"/>
</dbReference>
<dbReference type="PANTHER" id="PTHR32494">
    <property type="entry name" value="ALLANTOATE DEIMINASE-RELATED"/>
    <property type="match status" value="1"/>
</dbReference>
<dbReference type="Pfam" id="PF07687">
    <property type="entry name" value="M20_dimer"/>
    <property type="match status" value="1"/>
</dbReference>
<dbReference type="Pfam" id="PF01546">
    <property type="entry name" value="Peptidase_M20"/>
    <property type="match status" value="1"/>
</dbReference>
<dbReference type="PIRSF" id="PIRSF001235">
    <property type="entry name" value="Amidase_carbamoylase"/>
    <property type="match status" value="1"/>
</dbReference>
<dbReference type="SUPFAM" id="SSF55031">
    <property type="entry name" value="Bacterial exopeptidase dimerisation domain"/>
    <property type="match status" value="1"/>
</dbReference>
<dbReference type="SUPFAM" id="SSF53187">
    <property type="entry name" value="Zn-dependent exopeptidases"/>
    <property type="match status" value="1"/>
</dbReference>
<proteinExistence type="evidence at protein level"/>
<evidence type="ECO:0000305" key="1"/>
<sequence>MSINLNRVQNLIEKLAFISSVPNELTRLAFTEEDEKAHNMIIELCKEYDLSIRRDSIGNLFIRKAGKEDFLPAVAFGSHIDTVVNAGKFDGPLGSVAGLEILLQLCEQNIQTRYPLELIIFTCEESSRFNFATLGSKVMCGIVNQEKLSSLRDKQGKGLSEAMAEVGMNFNLVNQAKRDAKEFKCFFELHIEQGPRLENEGKTIGVVTGIAAPIRAIVKIKGQADHSGATAMHYRHDALLGGSELSLAIERAAIQAGHSTVATVGNITAKPGVMNVVPGYCELLVDIRGTHVQARDSVFELLQEEISKVSEKRGLLIELQLISKDNPIILPENMVNQIAETAHSLGYSYEIMPSGAGHDAMHMATLCPTGMIFIPSHLGISHNPLEFTDWKDIEAGIKVLQKVILEQAEVC</sequence>
<name>Y588_HAEIN</name>
<reference key="1">
    <citation type="journal article" date="1995" name="Science">
        <title>Whole-genome random sequencing and assembly of Haemophilus influenzae Rd.</title>
        <authorList>
            <person name="Fleischmann R.D."/>
            <person name="Adams M.D."/>
            <person name="White O."/>
            <person name="Clayton R.A."/>
            <person name="Kirkness E.F."/>
            <person name="Kerlavage A.R."/>
            <person name="Bult C.J."/>
            <person name="Tomb J.-F."/>
            <person name="Dougherty B.A."/>
            <person name="Merrick J.M."/>
            <person name="McKenney K."/>
            <person name="Sutton G.G."/>
            <person name="FitzHugh W."/>
            <person name="Fields C.A."/>
            <person name="Gocayne J.D."/>
            <person name="Scott J.D."/>
            <person name="Shirley R."/>
            <person name="Liu L.-I."/>
            <person name="Glodek A."/>
            <person name="Kelley J.M."/>
            <person name="Weidman J.F."/>
            <person name="Phillips C.A."/>
            <person name="Spriggs T."/>
            <person name="Hedblom E."/>
            <person name="Cotton M.D."/>
            <person name="Utterback T.R."/>
            <person name="Hanna M.C."/>
            <person name="Nguyen D.T."/>
            <person name="Saudek D.M."/>
            <person name="Brandon R.C."/>
            <person name="Fine L.D."/>
            <person name="Fritchman J.L."/>
            <person name="Fuhrmann J.L."/>
            <person name="Geoghagen N.S.M."/>
            <person name="Gnehm C.L."/>
            <person name="McDonald L.A."/>
            <person name="Small K.V."/>
            <person name="Fraser C.M."/>
            <person name="Smith H.O."/>
            <person name="Venter J.C."/>
        </authorList>
    </citation>
    <scope>NUCLEOTIDE SEQUENCE [LARGE SCALE GENOMIC DNA]</scope>
    <source>
        <strain>ATCC 51907 / DSM 11121 / KW20 / Rd</strain>
    </source>
</reference>
<reference key="2">
    <citation type="journal article" date="2000" name="Electrophoresis">
        <title>Two-dimensional map of the proteome of Haemophilus influenzae.</title>
        <authorList>
            <person name="Langen H."/>
            <person name="Takacs B."/>
            <person name="Evers S."/>
            <person name="Berndt P."/>
            <person name="Lahm H.W."/>
            <person name="Wipf B."/>
            <person name="Gray C."/>
            <person name="Fountoulakis M."/>
        </authorList>
    </citation>
    <scope>IDENTIFICATION BY MASS SPECTROMETRY</scope>
    <source>
        <strain>ATCC 51907 / DSM 11121 / KW20 / Rd</strain>
    </source>
</reference>
<keyword id="KW-0378">Hydrolase</keyword>
<keyword id="KW-1185">Reference proteome</keyword>
<accession>Q57051</accession>
<accession>O05027</accession>
<gene>
    <name type="ordered locus">HI_0588</name>
</gene>
<organism>
    <name type="scientific">Haemophilus influenzae (strain ATCC 51907 / DSM 11121 / KW20 / Rd)</name>
    <dbReference type="NCBI Taxonomy" id="71421"/>
    <lineage>
        <taxon>Bacteria</taxon>
        <taxon>Pseudomonadati</taxon>
        <taxon>Pseudomonadota</taxon>
        <taxon>Gammaproteobacteria</taxon>
        <taxon>Pasteurellales</taxon>
        <taxon>Pasteurellaceae</taxon>
        <taxon>Haemophilus</taxon>
    </lineage>
</organism>
<feature type="chain" id="PRO_0000061963" description="Uncharacterized hydrolase HI_0588">
    <location>
        <begin position="1"/>
        <end position="411"/>
    </location>
</feature>
<protein>
    <recommendedName>
        <fullName>Uncharacterized hydrolase HI_0588</fullName>
        <ecNumber>3.-.-.-</ecNumber>
    </recommendedName>
</protein>